<reference key="1">
    <citation type="journal article" date="1985" name="Gene">
        <title>Nucleotide sequence of the immunity region of Bacillus subtilis bacteriophage phi 105: identification of the repressor gene and its mRNA and protein products.</title>
        <authorList>
            <person name="Cully D.F."/>
            <person name="Garro A.J."/>
        </authorList>
    </citation>
    <scope>NUCLEOTIDE SEQUENCE [GENOMIC DNA]</scope>
</reference>
<name>YIMC_BPPH1</name>
<proteinExistence type="predicted"/>
<organism>
    <name type="scientific">Bacillus phage phi105</name>
    <name type="common">Bacteriophage phi-105</name>
    <dbReference type="NCBI Taxonomy" id="10717"/>
    <lineage>
        <taxon>Viruses</taxon>
        <taxon>Duplodnaviria</taxon>
        <taxon>Heunggongvirae</taxon>
        <taxon>Uroviricota</taxon>
        <taxon>Caudoviricetes</taxon>
        <taxon>Spizizenvirus</taxon>
        <taxon>Spizizenvirus sv105</taxon>
    </lineage>
</organism>
<protein>
    <recommendedName>
        <fullName>Uncharacterized immunity region protein 12</fullName>
    </recommendedName>
</protein>
<feature type="chain" id="PRO_0000077729" description="Uncharacterized immunity region protein 12">
    <location>
        <begin position="1"/>
        <end position="87"/>
    </location>
</feature>
<organismHost>
    <name type="scientific">Bacillus subtilis</name>
    <dbReference type="NCBI Taxonomy" id="1423"/>
</organismHost>
<accession>P10435</accession>
<dbReference type="EMBL" id="M11920">
    <property type="protein sequence ID" value="AAA88397.1"/>
    <property type="molecule type" value="Genomic_DNA"/>
</dbReference>
<dbReference type="PIR" id="B27234">
    <property type="entry name" value="IMBP12"/>
</dbReference>
<sequence>MTAISSRVNSVFLYWLTTQSGRRSSTAKVFASTSYLSTEKRVRSFINGVFARGCNCACPNSWEHTKVLSAWFKLELITIYLFRLSYL</sequence>